<reference key="1">
    <citation type="journal article" date="2008" name="Genomics">
        <title>Genomic, evolutionary, and expression analyses of cee, an ancient gene involved in normal growth and development.</title>
        <authorList>
            <person name="Fernandes J.M.O."/>
            <person name="Macqueen D.J."/>
            <person name="Lee H.-T."/>
            <person name="Johnston I.A."/>
        </authorList>
    </citation>
    <scope>NUCLEOTIDE SEQUENCE [MRNA]</scope>
</reference>
<feature type="chain" id="PRO_0000403722" description="Golgi to ER traffic protein 4 homolog">
    <location>
        <begin position="1"/>
        <end position="323"/>
    </location>
</feature>
<feature type="region of interest" description="Disordered" evidence="2">
    <location>
        <begin position="303"/>
        <end position="323"/>
    </location>
</feature>
<feature type="compositionally biased region" description="Acidic residues" evidence="2">
    <location>
        <begin position="304"/>
        <end position="315"/>
    </location>
</feature>
<protein>
    <recommendedName>
        <fullName>Golgi to ER traffic protein 4 homolog</fullName>
    </recommendedName>
    <alternativeName>
        <fullName>Conserved edge expressed protein</fullName>
    </alternativeName>
</protein>
<proteinExistence type="evidence at transcript level"/>
<name>GET4_ORYLA</name>
<dbReference type="EMBL" id="EF177382">
    <property type="protein sequence ID" value="ABM53480.1"/>
    <property type="molecule type" value="mRNA"/>
</dbReference>
<dbReference type="RefSeq" id="NP_001098381.1">
    <property type="nucleotide sequence ID" value="NM_001104911.1"/>
</dbReference>
<dbReference type="SMR" id="A1Z3X3"/>
<dbReference type="FunCoup" id="A1Z3X3">
    <property type="interactions" value="1835"/>
</dbReference>
<dbReference type="STRING" id="8090.ENSORLP00000025242"/>
<dbReference type="GeneID" id="100125476"/>
<dbReference type="KEGG" id="ola:100125476"/>
<dbReference type="CTD" id="51608"/>
<dbReference type="eggNOG" id="KOG3024">
    <property type="taxonomic scope" value="Eukaryota"/>
</dbReference>
<dbReference type="InParanoid" id="A1Z3X3"/>
<dbReference type="OrthoDB" id="10252405at2759"/>
<dbReference type="Proteomes" id="UP000001038">
    <property type="component" value="Unplaced"/>
</dbReference>
<dbReference type="Proteomes" id="UP000265180">
    <property type="component" value="Chromosome 9"/>
</dbReference>
<dbReference type="Proteomes" id="UP000265200">
    <property type="component" value="Chromosome 9"/>
</dbReference>
<dbReference type="GO" id="GO:0071818">
    <property type="term" value="C:BAT3 complex"/>
    <property type="evidence" value="ECO:0000250"/>
    <property type="project" value="UniProtKB"/>
</dbReference>
<dbReference type="GO" id="GO:0005829">
    <property type="term" value="C:cytosol"/>
    <property type="evidence" value="ECO:0000250"/>
    <property type="project" value="UniProtKB"/>
</dbReference>
<dbReference type="GO" id="GO:0045048">
    <property type="term" value="P:protein insertion into ER membrane"/>
    <property type="evidence" value="ECO:0000318"/>
    <property type="project" value="GO_Central"/>
</dbReference>
<dbReference type="GO" id="GO:0071816">
    <property type="term" value="P:tail-anchored membrane protein insertion into ER membrane"/>
    <property type="evidence" value="ECO:0000250"/>
    <property type="project" value="UniProtKB"/>
</dbReference>
<dbReference type="FunFam" id="1.25.40.10:FF:000060">
    <property type="entry name" value="Golgi to ER traffic protein 4 homolog"/>
    <property type="match status" value="1"/>
</dbReference>
<dbReference type="Gene3D" id="1.25.40.10">
    <property type="entry name" value="Tetratricopeptide repeat domain"/>
    <property type="match status" value="1"/>
</dbReference>
<dbReference type="InterPro" id="IPR007317">
    <property type="entry name" value="GET4"/>
</dbReference>
<dbReference type="InterPro" id="IPR011990">
    <property type="entry name" value="TPR-like_helical_dom_sf"/>
</dbReference>
<dbReference type="PANTHER" id="PTHR12875">
    <property type="entry name" value="GOLGI TO ER TRAFFIC PROTEIN 4 HOMOLOG"/>
    <property type="match status" value="1"/>
</dbReference>
<dbReference type="PANTHER" id="PTHR12875:SF0">
    <property type="entry name" value="GOLGI TO ER TRAFFIC PROTEIN 4 HOMOLOG"/>
    <property type="match status" value="1"/>
</dbReference>
<dbReference type="Pfam" id="PF04190">
    <property type="entry name" value="GET4"/>
    <property type="match status" value="1"/>
</dbReference>
<accession>A1Z3X3</accession>
<sequence>MSDPESLRCSSVRNRGGVQRVEGKLRASVERGDYYEAHQMYRTLFFRYMSQAKHAEARELMYRGALLFFSHNQQNSAADLSMLVLEVLEKSDAKVEDEILEHLAKLFSLMDQNSPERAAFVSRALKWSTGGSSKLGHPKLHQLLALTLWKEQNYSESRYHFLHSSDGEGCAQMLVEYWASRGYRNEVDLFVAQAVLQFLCLKNKSSASVVFSTYTEKHPSIQKGPPFVQPLLNFIWFLLLAVDGGKLTVFTVLCEQYQPSLKRDPMYNEYLDRIGQLFFGVPPKQSPSYGGLLGNLLNSLMGSGEDDDGVEEAQEDSSPIELD</sequence>
<keyword id="KW-0963">Cytoplasm</keyword>
<keyword id="KW-1185">Reference proteome</keyword>
<keyword id="KW-0813">Transport</keyword>
<comment type="function">
    <text evidence="1">As part of a cytosolic protein quality control complex, the bag6/bat3 complex, maintains misfolded and hydrophobic patches-containing proteins in a soluble state and participates in their proper delivery to the endoplasmic reticulum or alternatively can promote their sorting to the proteasome where they undergo degradation. The bag6/bat3 complex is involved in the post-translational delivery of tail-anchored/type II transmembrane proteins to the endoplasmic reticulum membrane. Similarly, the bag6/bat3 complex also functions as a sorting platform for proteins of the secretory pathway that are mislocalized to the cytosol either delivering them to the proteasome for degradation or to the endoplasmic reticulum. The bag6/bat3 complex also plays a role in the endoplasmic reticulum-associated degradation (ERAD), a quality control mechanism that eliminates unwanted proteins of the endoplasmic reticulum through their retrotranslocation to the cytosol and their targeting to the proteasome. It maintains these retrotranslocated proteins in an unfolded yet soluble state condition in the cytosol to ensure their proper delivery to the proteasome.</text>
</comment>
<comment type="subunit">
    <text evidence="1">Component of the bag6/bat3 complex.</text>
</comment>
<comment type="subcellular location">
    <subcellularLocation>
        <location evidence="1">Cytoplasm</location>
        <location evidence="1">Cytosol</location>
    </subcellularLocation>
</comment>
<comment type="similarity">
    <text evidence="3">Belongs to the GET4 family.</text>
</comment>
<gene>
    <name type="primary">get4</name>
    <name type="synonym">cee</name>
</gene>
<evidence type="ECO:0000250" key="1">
    <source>
        <dbReference type="UniProtKB" id="Q7L5D6"/>
    </source>
</evidence>
<evidence type="ECO:0000256" key="2">
    <source>
        <dbReference type="SAM" id="MobiDB-lite"/>
    </source>
</evidence>
<evidence type="ECO:0000305" key="3"/>
<organism>
    <name type="scientific">Oryzias latipes</name>
    <name type="common">Japanese rice fish</name>
    <name type="synonym">Japanese killifish</name>
    <dbReference type="NCBI Taxonomy" id="8090"/>
    <lineage>
        <taxon>Eukaryota</taxon>
        <taxon>Metazoa</taxon>
        <taxon>Chordata</taxon>
        <taxon>Craniata</taxon>
        <taxon>Vertebrata</taxon>
        <taxon>Euteleostomi</taxon>
        <taxon>Actinopterygii</taxon>
        <taxon>Neopterygii</taxon>
        <taxon>Teleostei</taxon>
        <taxon>Neoteleostei</taxon>
        <taxon>Acanthomorphata</taxon>
        <taxon>Ovalentaria</taxon>
        <taxon>Atherinomorphae</taxon>
        <taxon>Beloniformes</taxon>
        <taxon>Adrianichthyidae</taxon>
        <taxon>Oryziinae</taxon>
        <taxon>Oryzias</taxon>
    </lineage>
</organism>